<feature type="chain" id="PRO_0000233024" description="Tubulin beta-3 chain">
    <location>
        <begin position="1"/>
        <end position="450"/>
    </location>
</feature>
<feature type="region of interest" description="Disordered" evidence="6">
    <location>
        <begin position="425"/>
        <end position="450"/>
    </location>
</feature>
<feature type="short sequence motif" description="MREI motif" evidence="1">
    <location>
        <begin position="1"/>
        <end position="4"/>
    </location>
</feature>
<feature type="compositionally biased region" description="Acidic residues" evidence="6">
    <location>
        <begin position="429"/>
        <end position="450"/>
    </location>
</feature>
<feature type="binding site" evidence="3">
    <location>
        <position position="11"/>
    </location>
    <ligand>
        <name>GTP</name>
        <dbReference type="ChEBI" id="CHEBI:37565"/>
    </ligand>
</feature>
<feature type="binding site" evidence="2">
    <location>
        <position position="69"/>
    </location>
    <ligand>
        <name>GTP</name>
        <dbReference type="ChEBI" id="CHEBI:37565"/>
    </ligand>
</feature>
<feature type="binding site" evidence="2">
    <location>
        <position position="69"/>
    </location>
    <ligand>
        <name>Mg(2+)</name>
        <dbReference type="ChEBI" id="CHEBI:18420"/>
    </ligand>
</feature>
<feature type="binding site" evidence="3">
    <location>
        <position position="138"/>
    </location>
    <ligand>
        <name>GTP</name>
        <dbReference type="ChEBI" id="CHEBI:37565"/>
    </ligand>
</feature>
<feature type="binding site" evidence="3">
    <location>
        <position position="142"/>
    </location>
    <ligand>
        <name>GTP</name>
        <dbReference type="ChEBI" id="CHEBI:37565"/>
    </ligand>
</feature>
<feature type="binding site" evidence="3">
    <location>
        <position position="143"/>
    </location>
    <ligand>
        <name>GTP</name>
        <dbReference type="ChEBI" id="CHEBI:37565"/>
    </ligand>
</feature>
<feature type="binding site" evidence="3">
    <location>
        <position position="144"/>
    </location>
    <ligand>
        <name>GTP</name>
        <dbReference type="ChEBI" id="CHEBI:37565"/>
    </ligand>
</feature>
<feature type="binding site" evidence="3">
    <location>
        <position position="204"/>
    </location>
    <ligand>
        <name>GTP</name>
        <dbReference type="ChEBI" id="CHEBI:37565"/>
    </ligand>
</feature>
<feature type="binding site" evidence="3">
    <location>
        <position position="226"/>
    </location>
    <ligand>
        <name>GTP</name>
        <dbReference type="ChEBI" id="CHEBI:37565"/>
    </ligand>
</feature>
<feature type="modified residue" description="Phosphoserine; by CDK1" evidence="3">
    <location>
        <position position="172"/>
    </location>
</feature>
<feature type="modified residue" description="5-glutamyl polyglutamate" evidence="7">
    <location>
        <position position="438"/>
    </location>
</feature>
<feature type="modified residue" description="Phosphoserine" evidence="7">
    <location>
        <position position="444"/>
    </location>
</feature>
<feature type="strand" evidence="12">
    <location>
        <begin position="3"/>
        <end position="9"/>
    </location>
</feature>
<feature type="helix" evidence="12">
    <location>
        <begin position="10"/>
        <end position="28"/>
    </location>
</feature>
<feature type="strand" evidence="12">
    <location>
        <begin position="34"/>
        <end position="36"/>
    </location>
</feature>
<feature type="helix" evidence="12">
    <location>
        <begin position="42"/>
        <end position="45"/>
    </location>
</feature>
<feature type="helix" evidence="12">
    <location>
        <begin position="47"/>
        <end position="49"/>
    </location>
</feature>
<feature type="strand" evidence="12">
    <location>
        <begin position="51"/>
        <end position="53"/>
    </location>
</feature>
<feature type="strand" evidence="12">
    <location>
        <begin position="57"/>
        <end position="61"/>
    </location>
</feature>
<feature type="strand" evidence="12">
    <location>
        <begin position="63"/>
        <end position="69"/>
    </location>
</feature>
<feature type="helix" evidence="12">
    <location>
        <begin position="71"/>
        <end position="78"/>
    </location>
</feature>
<feature type="turn" evidence="12">
    <location>
        <begin position="80"/>
        <end position="84"/>
    </location>
</feature>
<feature type="helix" evidence="12">
    <location>
        <begin position="87"/>
        <end position="89"/>
    </location>
</feature>
<feature type="strand" evidence="12">
    <location>
        <begin position="90"/>
        <end position="92"/>
    </location>
</feature>
<feature type="helix" evidence="12">
    <location>
        <begin position="101"/>
        <end position="106"/>
    </location>
</feature>
<feature type="helix" evidence="12">
    <location>
        <begin position="108"/>
        <end position="125"/>
    </location>
</feature>
<feature type="strand" evidence="12">
    <location>
        <begin position="128"/>
        <end position="142"/>
    </location>
</feature>
<feature type="helix" evidence="12">
    <location>
        <begin position="143"/>
        <end position="158"/>
    </location>
</feature>
<feature type="strand" evidence="12">
    <location>
        <begin position="162"/>
        <end position="170"/>
    </location>
</feature>
<feature type="turn" evidence="12">
    <location>
        <begin position="173"/>
        <end position="175"/>
    </location>
</feature>
<feature type="helix" evidence="12">
    <location>
        <begin position="181"/>
        <end position="195"/>
    </location>
</feature>
<feature type="strand" evidence="12">
    <location>
        <begin position="197"/>
        <end position="203"/>
    </location>
</feature>
<feature type="helix" evidence="12">
    <location>
        <begin position="204"/>
        <end position="213"/>
    </location>
</feature>
<feature type="helix" evidence="12">
    <location>
        <begin position="222"/>
        <end position="241"/>
    </location>
</feature>
<feature type="strand" evidence="12">
    <location>
        <begin position="245"/>
        <end position="247"/>
    </location>
</feature>
<feature type="helix" evidence="12">
    <location>
        <begin position="250"/>
        <end position="257"/>
    </location>
</feature>
<feature type="strand" evidence="12">
    <location>
        <begin position="265"/>
        <end position="272"/>
    </location>
</feature>
<feature type="helix" evidence="12">
    <location>
        <begin position="286"/>
        <end position="294"/>
    </location>
</feature>
<feature type="helix" evidence="12">
    <location>
        <begin position="296"/>
        <end position="298"/>
    </location>
</feature>
<feature type="strand" evidence="12">
    <location>
        <begin position="299"/>
        <end position="302"/>
    </location>
</feature>
<feature type="helix" evidence="12">
    <location>
        <begin position="305"/>
        <end position="307"/>
    </location>
</feature>
<feature type="strand" evidence="12">
    <location>
        <begin position="310"/>
        <end position="320"/>
    </location>
</feature>
<feature type="helix" evidence="12">
    <location>
        <begin position="323"/>
        <end position="336"/>
    </location>
</feature>
<feature type="helix" evidence="12">
    <location>
        <begin position="338"/>
        <end position="340"/>
    </location>
</feature>
<feature type="strand" evidence="12">
    <location>
        <begin position="349"/>
        <end position="356"/>
    </location>
</feature>
<feature type="strand" evidence="12">
    <location>
        <begin position="364"/>
        <end position="371"/>
    </location>
</feature>
<feature type="helix" evidence="12">
    <location>
        <begin position="372"/>
        <end position="374"/>
    </location>
</feature>
<feature type="helix" evidence="12">
    <location>
        <begin position="375"/>
        <end position="390"/>
    </location>
</feature>
<feature type="turn" evidence="12">
    <location>
        <begin position="391"/>
        <end position="395"/>
    </location>
</feature>
<feature type="helix" evidence="12">
    <location>
        <begin position="396"/>
        <end position="399"/>
    </location>
</feature>
<feature type="turn" evidence="12">
    <location>
        <begin position="400"/>
        <end position="402"/>
    </location>
</feature>
<feature type="helix" evidence="12">
    <location>
        <begin position="405"/>
        <end position="427"/>
    </location>
</feature>
<organism>
    <name type="scientific">Bos taurus</name>
    <name type="common">Bovine</name>
    <dbReference type="NCBI Taxonomy" id="9913"/>
    <lineage>
        <taxon>Eukaryota</taxon>
        <taxon>Metazoa</taxon>
        <taxon>Chordata</taxon>
        <taxon>Craniata</taxon>
        <taxon>Vertebrata</taxon>
        <taxon>Euteleostomi</taxon>
        <taxon>Mammalia</taxon>
        <taxon>Eutheria</taxon>
        <taxon>Laurasiatheria</taxon>
        <taxon>Artiodactyla</taxon>
        <taxon>Ruminantia</taxon>
        <taxon>Pecora</taxon>
        <taxon>Bovidae</taxon>
        <taxon>Bovinae</taxon>
        <taxon>Bos</taxon>
    </lineage>
</organism>
<comment type="function">
    <text evidence="3 5 8 9 10">Tubulin is the major constituent of microtubules, protein filaments consisting of alpha- and beta-tubulin heterodimers (PubMed:6504138, PubMed:2207090, PubMed:7704569). Microtubules grow by the addition of GTP-tubulin dimers to the microtubule end, where a stabilizing cap forms (By similarity). Below the cap, alpha-beta tubulin heterodimers are in GDP-bound state, owing to GTPase activity of alpha-tubulin (PubMed:6504138, PubMed:2207090, PubMed:7704569). TUBB3 plays a critical role in proper axon guidance and maintenance (By similarity). Binding of NTN1/Netrin-1 to its receptor UNC5C might cause dissociation of UNC5C from polymerized TUBB3 in microtubules and thereby lead to increased microtubule dynamics and axon repulsion (By similarity). Plays a role in dorsal root ganglion axon projection towards the spinal cord (By similarity).</text>
</comment>
<comment type="cofactor">
    <cofactor evidence="2">
        <name>Mg(2+)</name>
        <dbReference type="ChEBI" id="CHEBI:18420"/>
    </cofactor>
</comment>
<comment type="subunit">
    <text evidence="3 5 8 9 10">Heterodimer of alpha- and beta-tubulin (PubMed:6504138, PubMed:2207090, PubMed:7704569). A typical microtubule is a hollow water-filled tube with an outer diameter of 25 nm and an inner diameter of 15 nM (By similarity). Alpha-beta heterodimers associate head-to-tail to form protofilaments running lengthwise along the microtubule wall with the beta-tubulin subunit facing the microtubule plus end conferring a structural polarity (By similarity). Microtubules usually have 13 protofilaments but different protofilament numbers can be found in some organisms and specialized cells (By similarity). Interacts with gamma-tubulin; the interaction allows microtubules to nucleate from the gamma-tubulin ring complex (gTuRC) (By similarity). Interacts with UNC5C (via cytoplasmic domain); this interaction is decreased by NTN1/Netrin-1 (By similarity). Interacts with NLRP5/MATER at cytoskeleton microtubules (By similarity). Interacts with DPYSL5 (By similarity). Interacts with CFAP61 (By similarity).</text>
</comment>
<comment type="subcellular location">
    <subcellularLocation>
        <location evidence="8 9 10">Cytoplasm</location>
        <location evidence="8 9 10">Cytoskeleton</location>
    </subcellularLocation>
    <subcellularLocation>
        <location evidence="5">Cell projection</location>
        <location evidence="5">Growth cone</location>
    </subcellularLocation>
    <subcellularLocation>
        <location evidence="5">Cell projection</location>
        <location evidence="5">Lamellipodium</location>
    </subcellularLocation>
    <subcellularLocation>
        <location evidence="5">Cell projection</location>
        <location evidence="5">Filopodium</location>
    </subcellularLocation>
</comment>
<comment type="domain">
    <text>The highly acidic C-terminal region may bind cations such as calcium.</text>
</comment>
<comment type="domain">
    <text evidence="1">The MREI motif is common among all beta-tubulin isoforms and may be critical for tubulin autoregulation.</text>
</comment>
<comment type="PTM">
    <text evidence="3">Phosphorylated on Ser-172 by CDK1 during the cell cycle, from metaphase to telophase, but not in interphase. This phosphorylation inhibits tubulin incorporation into microtubules.</text>
</comment>
<comment type="PTM">
    <text evidence="5">Some glutamate residues at the C-terminus are polyglycylated, resulting in polyglycine chains on the gamma-carboxyl group. Glycylation is mainly limited to tubulin incorporated into axonemes (cilia and flagella) whereas glutamylation is prevalent in neuronal cells, centrioles, axonemes, and the mitotic spindle. Both modifications can coexist on the same protein on adjacent residues, and lowering polyglycylation levels increases polyglutamylation, and reciprocally. Cilia and flagella glycylation is required for their stability and maintenance. Flagella glycylation controls sperm motility.</text>
</comment>
<comment type="PTM">
    <text evidence="4 5 7">Some glutamate residues at the C-terminus are polyglutamylated, resulting in polyglutamate chains on the gamma-carboxyl group (PubMed:2052551). Polyglutamylation plays a key role in microtubule severing by spastin (SPAST). SPAST preferentially recognizes and acts on microtubules decorated with short polyglutamate tails: severing activity by SPAST increases as the number of glutamates per tubulin rises from one to eight, but decreases beyond this glutamylation threshold (By similarity). Glutamylation is also involved in cilia motility (By similarity).</text>
</comment>
<comment type="similarity">
    <text evidence="11">Belongs to the tubulin family.</text>
</comment>
<dbReference type="EMBL" id="BC111295">
    <property type="protein sequence ID" value="AAI11296.1"/>
    <property type="molecule type" value="mRNA"/>
</dbReference>
<dbReference type="RefSeq" id="NP_001070595.1">
    <property type="nucleotide sequence ID" value="NM_001077127.1"/>
</dbReference>
<dbReference type="PDB" id="7ALR">
    <property type="method" value="X-ray"/>
    <property type="resolution" value="1.93 A"/>
    <property type="chains" value="B=1-450"/>
</dbReference>
<dbReference type="PDB" id="7ODN">
    <property type="method" value="X-ray"/>
    <property type="resolution" value="2.33 A"/>
    <property type="chains" value="B=1-450"/>
</dbReference>
<dbReference type="PDBsum" id="7ALR"/>
<dbReference type="PDBsum" id="7ODN"/>
<dbReference type="EMDB" id="EMD-16436"/>
<dbReference type="EMDB" id="EMD-25649"/>
<dbReference type="EMDB" id="EMD-25658"/>
<dbReference type="EMDB" id="EMD-25664"/>
<dbReference type="EMDB" id="EMD-25674"/>
<dbReference type="EMDB" id="EMD-25897"/>
<dbReference type="EMDB" id="EMD-25908"/>
<dbReference type="SMR" id="Q2T9S0"/>
<dbReference type="FunCoup" id="Q2T9S0">
    <property type="interactions" value="796"/>
</dbReference>
<dbReference type="IntAct" id="Q2T9S0">
    <property type="interactions" value="1"/>
</dbReference>
<dbReference type="STRING" id="9913.ENSBTAP00000000568"/>
<dbReference type="iPTMnet" id="Q2T9S0"/>
<dbReference type="PaxDb" id="9913-ENSBTAP00000000568"/>
<dbReference type="PeptideAtlas" id="Q2T9S0"/>
<dbReference type="GeneID" id="768070"/>
<dbReference type="KEGG" id="bta:768070"/>
<dbReference type="CTD" id="10381"/>
<dbReference type="VEuPathDB" id="HostDB:ENSBTAG00000023730"/>
<dbReference type="eggNOG" id="KOG1375">
    <property type="taxonomic scope" value="Eukaryota"/>
</dbReference>
<dbReference type="HOGENOM" id="CLU_015718_1_1_1"/>
<dbReference type="InParanoid" id="Q2T9S0"/>
<dbReference type="OMA" id="CQDEMEG"/>
<dbReference type="OrthoDB" id="1662883at2759"/>
<dbReference type="TreeFam" id="TF300298"/>
<dbReference type="Reactome" id="R-BTA-190840">
    <property type="pathway name" value="Microtubule-dependent trafficking of connexons from Golgi to the plasma membrane"/>
</dbReference>
<dbReference type="Reactome" id="R-BTA-2132295">
    <property type="pathway name" value="MHC class II antigen presentation"/>
</dbReference>
<dbReference type="Reactome" id="R-BTA-2467813">
    <property type="pathway name" value="Separation of Sister Chromatids"/>
</dbReference>
<dbReference type="Reactome" id="R-BTA-2500257">
    <property type="pathway name" value="Resolution of Sister Chromatid Cohesion"/>
</dbReference>
<dbReference type="Reactome" id="R-BTA-3371497">
    <property type="pathway name" value="HSP90 chaperone cycle for steroid hormone receptors (SHR) in the presence of ligand"/>
</dbReference>
<dbReference type="Reactome" id="R-BTA-380320">
    <property type="pathway name" value="Recruitment of NuMA to mitotic centrosomes"/>
</dbReference>
<dbReference type="Reactome" id="R-BTA-5610787">
    <property type="pathway name" value="Hedgehog 'off' state"/>
</dbReference>
<dbReference type="Reactome" id="R-BTA-5617833">
    <property type="pathway name" value="Cilium Assembly"/>
</dbReference>
<dbReference type="Reactome" id="R-BTA-5620924">
    <property type="pathway name" value="Intraflagellar transport"/>
</dbReference>
<dbReference type="Reactome" id="R-BTA-5626467">
    <property type="pathway name" value="RHO GTPases activate IQGAPs"/>
</dbReference>
<dbReference type="Reactome" id="R-BTA-5663220">
    <property type="pathway name" value="RHO GTPases Activate Formins"/>
</dbReference>
<dbReference type="Reactome" id="R-BTA-6807878">
    <property type="pathway name" value="COPI-mediated anterograde transport"/>
</dbReference>
<dbReference type="Reactome" id="R-BTA-6811434">
    <property type="pathway name" value="COPI-dependent Golgi-to-ER retrograde traffic"/>
</dbReference>
<dbReference type="Reactome" id="R-BTA-6811436">
    <property type="pathway name" value="COPI-independent Golgi-to-ER retrograde traffic"/>
</dbReference>
<dbReference type="Reactome" id="R-BTA-68877">
    <property type="pathway name" value="Mitotic Prometaphase"/>
</dbReference>
<dbReference type="Reactome" id="R-BTA-8852276">
    <property type="pathway name" value="The role of GTSE1 in G2/M progression after G2 checkpoint"/>
</dbReference>
<dbReference type="Reactome" id="R-BTA-8955332">
    <property type="pathway name" value="Carboxyterminal post-translational modifications of tubulin"/>
</dbReference>
<dbReference type="Reactome" id="R-BTA-9646399">
    <property type="pathway name" value="Aggrephagy"/>
</dbReference>
<dbReference type="Reactome" id="R-BTA-9648025">
    <property type="pathway name" value="EML4 and NUDC in mitotic spindle formation"/>
</dbReference>
<dbReference type="Reactome" id="R-BTA-9668328">
    <property type="pathway name" value="Sealing of the nuclear envelope (NE) by ESCRT-III"/>
</dbReference>
<dbReference type="Reactome" id="R-BTA-983189">
    <property type="pathway name" value="Kinesins"/>
</dbReference>
<dbReference type="Proteomes" id="UP000009136">
    <property type="component" value="Chromosome 18"/>
</dbReference>
<dbReference type="Bgee" id="ENSBTAG00000023730">
    <property type="expression patterns" value="Expressed in Ammon's horn and 93 other cell types or tissues"/>
</dbReference>
<dbReference type="GO" id="GO:0005737">
    <property type="term" value="C:cytoplasm"/>
    <property type="evidence" value="ECO:0000318"/>
    <property type="project" value="GO_Central"/>
</dbReference>
<dbReference type="GO" id="GO:0030175">
    <property type="term" value="C:filopodium"/>
    <property type="evidence" value="ECO:0000250"/>
    <property type="project" value="UniProtKB"/>
</dbReference>
<dbReference type="GO" id="GO:0030426">
    <property type="term" value="C:growth cone"/>
    <property type="evidence" value="ECO:0000250"/>
    <property type="project" value="UniProtKB"/>
</dbReference>
<dbReference type="GO" id="GO:0030027">
    <property type="term" value="C:lamellipodium"/>
    <property type="evidence" value="ECO:0000250"/>
    <property type="project" value="UniProtKB"/>
</dbReference>
<dbReference type="GO" id="GO:0005874">
    <property type="term" value="C:microtubule"/>
    <property type="evidence" value="ECO:0000318"/>
    <property type="project" value="GO_Central"/>
</dbReference>
<dbReference type="GO" id="GO:0015630">
    <property type="term" value="C:microtubule cytoskeleton"/>
    <property type="evidence" value="ECO:0000250"/>
    <property type="project" value="UniProtKB"/>
</dbReference>
<dbReference type="GO" id="GO:0005525">
    <property type="term" value="F:GTP binding"/>
    <property type="evidence" value="ECO:0000250"/>
    <property type="project" value="UniProtKB"/>
</dbReference>
<dbReference type="GO" id="GO:0003924">
    <property type="term" value="F:GTPase activity"/>
    <property type="evidence" value="ECO:0007669"/>
    <property type="project" value="InterPro"/>
</dbReference>
<dbReference type="GO" id="GO:0046872">
    <property type="term" value="F:metal ion binding"/>
    <property type="evidence" value="ECO:0007669"/>
    <property type="project" value="UniProtKB-KW"/>
</dbReference>
<dbReference type="GO" id="GO:0005200">
    <property type="term" value="F:structural constituent of cytoskeleton"/>
    <property type="evidence" value="ECO:0000250"/>
    <property type="project" value="UniProtKB"/>
</dbReference>
<dbReference type="GO" id="GO:0007411">
    <property type="term" value="P:axon guidance"/>
    <property type="evidence" value="ECO:0000250"/>
    <property type="project" value="UniProtKB"/>
</dbReference>
<dbReference type="GO" id="GO:1990791">
    <property type="term" value="P:dorsal root ganglion development"/>
    <property type="evidence" value="ECO:0000250"/>
    <property type="project" value="UniProtKB"/>
</dbReference>
<dbReference type="GO" id="GO:0000226">
    <property type="term" value="P:microtubule cytoskeleton organization"/>
    <property type="evidence" value="ECO:0000250"/>
    <property type="project" value="UniProtKB"/>
</dbReference>
<dbReference type="GO" id="GO:0000278">
    <property type="term" value="P:mitotic cell cycle"/>
    <property type="evidence" value="ECO:0000318"/>
    <property type="project" value="GO_Central"/>
</dbReference>
<dbReference type="GO" id="GO:0038007">
    <property type="term" value="P:netrin-activated signaling pathway"/>
    <property type="evidence" value="ECO:0000250"/>
    <property type="project" value="UniProtKB"/>
</dbReference>
<dbReference type="CDD" id="cd02187">
    <property type="entry name" value="beta_tubulin"/>
    <property type="match status" value="1"/>
</dbReference>
<dbReference type="FunFam" id="1.10.287.600:FF:000002">
    <property type="entry name" value="Tubulin beta chain"/>
    <property type="match status" value="1"/>
</dbReference>
<dbReference type="FunFam" id="3.30.1330.20:FF:000002">
    <property type="entry name" value="Tubulin beta chain"/>
    <property type="match status" value="1"/>
</dbReference>
<dbReference type="FunFam" id="3.40.50.1440:FF:000003">
    <property type="entry name" value="Tubulin beta chain"/>
    <property type="match status" value="1"/>
</dbReference>
<dbReference type="Gene3D" id="1.10.287.600">
    <property type="entry name" value="Helix hairpin bin"/>
    <property type="match status" value="1"/>
</dbReference>
<dbReference type="Gene3D" id="3.30.1330.20">
    <property type="entry name" value="Tubulin/FtsZ, C-terminal domain"/>
    <property type="match status" value="1"/>
</dbReference>
<dbReference type="Gene3D" id="3.40.50.1440">
    <property type="entry name" value="Tubulin/FtsZ, GTPase domain"/>
    <property type="match status" value="1"/>
</dbReference>
<dbReference type="InterPro" id="IPR013838">
    <property type="entry name" value="Beta-tubulin_BS"/>
</dbReference>
<dbReference type="InterPro" id="IPR002453">
    <property type="entry name" value="Beta_tubulin"/>
</dbReference>
<dbReference type="InterPro" id="IPR008280">
    <property type="entry name" value="Tub_FtsZ_C"/>
</dbReference>
<dbReference type="InterPro" id="IPR000217">
    <property type="entry name" value="Tubulin"/>
</dbReference>
<dbReference type="InterPro" id="IPR037103">
    <property type="entry name" value="Tubulin/FtsZ-like_C"/>
</dbReference>
<dbReference type="InterPro" id="IPR018316">
    <property type="entry name" value="Tubulin/FtsZ_2-layer-sand-dom"/>
</dbReference>
<dbReference type="InterPro" id="IPR036525">
    <property type="entry name" value="Tubulin/FtsZ_GTPase_sf"/>
</dbReference>
<dbReference type="InterPro" id="IPR023123">
    <property type="entry name" value="Tubulin_C"/>
</dbReference>
<dbReference type="InterPro" id="IPR017975">
    <property type="entry name" value="Tubulin_CS"/>
</dbReference>
<dbReference type="InterPro" id="IPR003008">
    <property type="entry name" value="Tubulin_FtsZ_GTPase"/>
</dbReference>
<dbReference type="PANTHER" id="PTHR11588">
    <property type="entry name" value="TUBULIN"/>
    <property type="match status" value="1"/>
</dbReference>
<dbReference type="Pfam" id="PF00091">
    <property type="entry name" value="Tubulin"/>
    <property type="match status" value="1"/>
</dbReference>
<dbReference type="Pfam" id="PF03953">
    <property type="entry name" value="Tubulin_C"/>
    <property type="match status" value="1"/>
</dbReference>
<dbReference type="PRINTS" id="PR01163">
    <property type="entry name" value="BETATUBULIN"/>
</dbReference>
<dbReference type="PRINTS" id="PR01161">
    <property type="entry name" value="TUBULIN"/>
</dbReference>
<dbReference type="SMART" id="SM00864">
    <property type="entry name" value="Tubulin"/>
    <property type="match status" value="1"/>
</dbReference>
<dbReference type="SMART" id="SM00865">
    <property type="entry name" value="Tubulin_C"/>
    <property type="match status" value="1"/>
</dbReference>
<dbReference type="SUPFAM" id="SSF55307">
    <property type="entry name" value="Tubulin C-terminal domain-like"/>
    <property type="match status" value="1"/>
</dbReference>
<dbReference type="SUPFAM" id="SSF52490">
    <property type="entry name" value="Tubulin nucleotide-binding domain-like"/>
    <property type="match status" value="1"/>
</dbReference>
<dbReference type="PROSITE" id="PS00227">
    <property type="entry name" value="TUBULIN"/>
    <property type="match status" value="1"/>
</dbReference>
<dbReference type="PROSITE" id="PS00228">
    <property type="entry name" value="TUBULIN_B_AUTOREG"/>
    <property type="match status" value="1"/>
</dbReference>
<keyword id="KW-0002">3D-structure</keyword>
<keyword id="KW-0966">Cell projection</keyword>
<keyword id="KW-0963">Cytoplasm</keyword>
<keyword id="KW-0206">Cytoskeleton</keyword>
<keyword id="KW-0903">Direct protein sequencing</keyword>
<keyword id="KW-0342">GTP-binding</keyword>
<keyword id="KW-1017">Isopeptide bond</keyword>
<keyword id="KW-0460">Magnesium</keyword>
<keyword id="KW-0479">Metal-binding</keyword>
<keyword id="KW-0493">Microtubule</keyword>
<keyword id="KW-0547">Nucleotide-binding</keyword>
<keyword id="KW-0597">Phosphoprotein</keyword>
<keyword id="KW-1185">Reference proteome</keyword>
<proteinExistence type="evidence at protein level"/>
<name>TBB3_BOVIN</name>
<accession>Q2T9S0</accession>
<reference key="1">
    <citation type="submission" date="2005-12" db="EMBL/GenBank/DDBJ databases">
        <authorList>
            <consortium name="NIH - Mammalian Gene Collection (MGC) project"/>
        </authorList>
    </citation>
    <scope>NUCLEOTIDE SEQUENCE [LARGE SCALE MRNA]</scope>
    <source>
        <strain>Crossbred X Angus</strain>
        <tissue>Liver</tissue>
    </source>
</reference>
<reference key="2">
    <citation type="journal article" date="1991" name="Proc. Natl. Acad. Sci. U.S.A.">
        <title>Characterization of posttranslational modifications in neuron-specific class III beta-tubulin by mass spectrometry.</title>
        <authorList>
            <person name="Alexander J.E."/>
            <person name="Hunt D.F."/>
            <person name="Lee M.K."/>
            <person name="Shabanowitz J."/>
            <person name="Michel H."/>
            <person name="Berlin S.C."/>
            <person name="MacDonald T.L."/>
            <person name="Sundberg R.J."/>
            <person name="Rebhun L.I."/>
            <person name="Frankfurter A."/>
        </authorList>
    </citation>
    <scope>PROTEIN SEQUENCE OF 437-450</scope>
    <scope>GLUTAMYLATION AT GLU-438</scope>
    <scope>PHOSPHORYLATION AT SER-444</scope>
</reference>
<reference key="3">
    <citation type="journal article" date="1984" name="Nature">
        <title>Dynamic instability of microtubule growth.</title>
        <authorList>
            <person name="Mitchison T."/>
            <person name="Kirschner M."/>
        </authorList>
    </citation>
    <scope>FUNCTION</scope>
    <scope>SUBUNIT</scope>
    <scope>SUBCELLULAR LOCATION</scope>
</reference>
<reference key="4">
    <citation type="journal article" date="1990" name="Biochemistry">
        <title>Role of GTP hydrolysis in microtubule polymerization: evidence for a coupled hydrolysis mechanism.</title>
        <authorList>
            <person name="Stewart R.J."/>
            <person name="Farrell K.W."/>
            <person name="Wilson L."/>
        </authorList>
    </citation>
    <scope>FUNCTION</scope>
    <scope>SUBUNIT</scope>
    <scope>SUBCELLULAR LOCATION</scope>
</reference>
<reference key="5">
    <citation type="journal article" date="1994" name="Curr. Biol.">
        <title>The minimum GTP cap required to stabilize microtubules.</title>
        <authorList>
            <person name="Drechsel D.N."/>
            <person name="Kirschner M.W."/>
        </authorList>
    </citation>
    <scope>FUNCTION</scope>
    <scope>SUBUNIT</scope>
    <scope>SUBCELLULAR LOCATION</scope>
</reference>
<protein>
    <recommendedName>
        <fullName>Tubulin beta-3 chain</fullName>
    </recommendedName>
</protein>
<gene>
    <name type="primary">TUBB3</name>
</gene>
<sequence length="450" mass="50433">MREIVHIQAGQCGNQIGAKFWEVISDEHGIDPSGNYVGDSDLQLERISVYYNEASSHKYVPRAILVDLEPGTMDSVRSGAFGHLFRPDNFIFGQSGAGNNWAKGHYTEGAELVDSVLDVVRKECENCDCLQGFQLTHSLGGGTGSGMGTLLISKVREEYPDRIMNTFSVVPSPKVSDTVVEPYNATLSIHQLVENTDETYCIDNEALYDICFRTLKLATPTYGDLNHLVSATMSGVTTSLRFPGQLNADLRKLAVNMVPFPRLHFFMPGFAPLTARGSQQYRALTVPELTQQMFDAKNMMAACDPRHGRYLTVATVFRGRMSMKEVDEQMLAIQSKNSSYFVEWIPNNVKVAVCDIPPRGLKMSSTFIGNSTAIQELFKRISEQFTAMFRRKAFLHWYTGEGMDEMEFTEAESNMNDLVSEYQQYQDATAEEEGEMYEDDEEESEAQGPK</sequence>
<evidence type="ECO:0000250" key="1">
    <source>
        <dbReference type="UniProtKB" id="P07437"/>
    </source>
</evidence>
<evidence type="ECO:0000250" key="2">
    <source>
        <dbReference type="UniProtKB" id="P68363"/>
    </source>
</evidence>
<evidence type="ECO:0000250" key="3">
    <source>
        <dbReference type="UniProtKB" id="Q13509"/>
    </source>
</evidence>
<evidence type="ECO:0000250" key="4">
    <source>
        <dbReference type="UniProtKB" id="Q71U36"/>
    </source>
</evidence>
<evidence type="ECO:0000250" key="5">
    <source>
        <dbReference type="UniProtKB" id="Q9ERD7"/>
    </source>
</evidence>
<evidence type="ECO:0000256" key="6">
    <source>
        <dbReference type="SAM" id="MobiDB-lite"/>
    </source>
</evidence>
<evidence type="ECO:0000269" key="7">
    <source>
    </source>
</evidence>
<evidence type="ECO:0000269" key="8">
    <source>
    </source>
</evidence>
<evidence type="ECO:0000269" key="9">
    <source>
    </source>
</evidence>
<evidence type="ECO:0000269" key="10">
    <source>
    </source>
</evidence>
<evidence type="ECO:0000305" key="11"/>
<evidence type="ECO:0007829" key="12">
    <source>
        <dbReference type="PDB" id="7ALR"/>
    </source>
</evidence>